<evidence type="ECO:0000255" key="1">
    <source>
        <dbReference type="PROSITE-ProRule" id="PRU00042"/>
    </source>
</evidence>
<evidence type="ECO:0000255" key="2">
    <source>
        <dbReference type="PROSITE-ProRule" id="PRU00187"/>
    </source>
</evidence>
<evidence type="ECO:0000256" key="3">
    <source>
        <dbReference type="SAM" id="MobiDB-lite"/>
    </source>
</evidence>
<evidence type="ECO:0000269" key="4">
    <source>
    </source>
</evidence>
<evidence type="ECO:0000269" key="5">
    <source>
    </source>
</evidence>
<evidence type="ECO:0000269" key="6">
    <source ref="3"/>
</evidence>
<evidence type="ECO:0000303" key="7">
    <source>
    </source>
</evidence>
<evidence type="ECO:0000303" key="8">
    <source>
    </source>
</evidence>
<evidence type="ECO:0000305" key="9"/>
<gene>
    <name type="primary">ZSCAN20</name>
    <name type="synonym">KOX29</name>
    <name type="synonym">ZNF31</name>
    <name type="synonym">ZNF360</name>
</gene>
<sequence>MAMALELQAQASPQPEPEELLIVKLEEDSWGSESKLWEKDRGSVSGPEASRQRFRQFQYRDAAGPHEAFSQLWALCCRWLRPEIRLKEQILELLVLEQFLTILPREVQTWVQARHPESGEEAVALVEDWHRETRTAGQSGLELHTEETRPLKTGEEAQSFQLQPVDPWPEGQSQKKGVKNTCPDLPNHLNAEVAPQPLKESAVLTPRVPTLPKMGSVGDWEVTAESQEALGPGKHAEKELCKDPPGDDCGNSVCLGVPVSKPSNTSEKEQGPEFWGLSLINSGKRSTADYSLDNEPAQALTWRDSRAWEEQYQWDVEDMKVSGVHWGYEETKTFLAILSESPFSEKLRTCHQNRQVYRAIAEQLRARGFLRTLEQCRYRVKNLLRNYRKAKSSHPPGTCPFYEELEALVRARTAIRATDGPGEAVALPRLGYSDAEMDEQEEGGWDPEEMAEDCNGAGLVNVESTQGPRIAGAPALFQSRIAGVHWGYEETKAFLAILSESPFSEKLRTCHQNSQVYRAIAERLCALGFLRTLEQCRYRFKNLLRSYRKAKSSHPPGTCPFYEELDSLMRARAAVRAMGTVREAAGLPRCGQSSAETDAQEAWGEVANEDAVKPSTLCPKAPDMGFEMRHEDEDQISEQDIFEGLPGALSKCPTEAVCQPLDWGEDSENENEDEGQWGNPSQEQWQESSSEEDLEKLIDHQGLYLAEKPYKCDTCMKSFSRSSHFIAHQRIHTGEKPYKCLECGKNFSDRSNLNTHQRIHTGEKPYKCLECGKSFSDHSNLITHQRIHTGEKPYKCGECWKSFNQSSNLLKHQRIHLGGNPDQCSEPGGNFAQSPSFSAHWRNSTEETAPEQPQSISKDLNSPGPHSTNSGEKLYECSECGRSFSKSSALISHQRIHTGEKPYECAECGKSFSKSSTLANHQRTHTGEKPYKCVDCGKCFSERSKLITHQRVHTGEKPYKCLECGKFFRDRSNLITHQRIHTGEKPYKCRECGKCFNQSSSLIIHQRIHTGEKPYKCTECGKDFNNSSHFSAHRRTHAGGKAS</sequence>
<organism>
    <name type="scientific">Homo sapiens</name>
    <name type="common">Human</name>
    <dbReference type="NCBI Taxonomy" id="9606"/>
    <lineage>
        <taxon>Eukaryota</taxon>
        <taxon>Metazoa</taxon>
        <taxon>Chordata</taxon>
        <taxon>Craniata</taxon>
        <taxon>Vertebrata</taxon>
        <taxon>Euteleostomi</taxon>
        <taxon>Mammalia</taxon>
        <taxon>Eutheria</taxon>
        <taxon>Euarchontoglires</taxon>
        <taxon>Primates</taxon>
        <taxon>Haplorrhini</taxon>
        <taxon>Catarrhini</taxon>
        <taxon>Hominidae</taxon>
        <taxon>Homo</taxon>
    </lineage>
</organism>
<keyword id="KW-0025">Alternative splicing</keyword>
<keyword id="KW-0238">DNA-binding</keyword>
<keyword id="KW-0479">Metal-binding</keyword>
<keyword id="KW-0539">Nucleus</keyword>
<keyword id="KW-1267">Proteomics identification</keyword>
<keyword id="KW-1185">Reference proteome</keyword>
<keyword id="KW-0677">Repeat</keyword>
<keyword id="KW-0804">Transcription</keyword>
<keyword id="KW-0805">Transcription regulation</keyword>
<keyword id="KW-0862">Zinc</keyword>
<keyword id="KW-0863">Zinc-finger</keyword>
<accession>P17040</accession>
<accession>A8K2D0</accession>
<accession>B1ALI4</accession>
<accession>B1ALI5</accession>
<accession>B1ALI6</accession>
<accession>Q6ZN23</accession>
<accession>Q96FA9</accession>
<accession>Q96H84</accession>
<protein>
    <recommendedName>
        <fullName>Zinc finger and SCAN domain-containing protein 20</fullName>
    </recommendedName>
    <alternativeName>
        <fullName>Zinc finger protein 31</fullName>
    </alternativeName>
    <alternativeName>
        <fullName>Zinc finger protein 360</fullName>
    </alternativeName>
    <alternativeName>
        <fullName>Zinc finger protein KOX29</fullName>
    </alternativeName>
</protein>
<proteinExistence type="evidence at protein level"/>
<reference key="1">
    <citation type="journal article" date="2004" name="Nat. Genet.">
        <title>Complete sequencing and characterization of 21,243 full-length human cDNAs.</title>
        <authorList>
            <person name="Ota T."/>
            <person name="Suzuki Y."/>
            <person name="Nishikawa T."/>
            <person name="Otsuki T."/>
            <person name="Sugiyama T."/>
            <person name="Irie R."/>
            <person name="Wakamatsu A."/>
            <person name="Hayashi K."/>
            <person name="Sato H."/>
            <person name="Nagai K."/>
            <person name="Kimura K."/>
            <person name="Makita H."/>
            <person name="Sekine M."/>
            <person name="Obayashi M."/>
            <person name="Nishi T."/>
            <person name="Shibahara T."/>
            <person name="Tanaka T."/>
            <person name="Ishii S."/>
            <person name="Yamamoto J."/>
            <person name="Saito K."/>
            <person name="Kawai Y."/>
            <person name="Isono Y."/>
            <person name="Nakamura Y."/>
            <person name="Nagahari K."/>
            <person name="Murakami K."/>
            <person name="Yasuda T."/>
            <person name="Iwayanagi T."/>
            <person name="Wagatsuma M."/>
            <person name="Shiratori A."/>
            <person name="Sudo H."/>
            <person name="Hosoiri T."/>
            <person name="Kaku Y."/>
            <person name="Kodaira H."/>
            <person name="Kondo H."/>
            <person name="Sugawara M."/>
            <person name="Takahashi M."/>
            <person name="Kanda K."/>
            <person name="Yokoi T."/>
            <person name="Furuya T."/>
            <person name="Kikkawa E."/>
            <person name="Omura Y."/>
            <person name="Abe K."/>
            <person name="Kamihara K."/>
            <person name="Katsuta N."/>
            <person name="Sato K."/>
            <person name="Tanikawa M."/>
            <person name="Yamazaki M."/>
            <person name="Ninomiya K."/>
            <person name="Ishibashi T."/>
            <person name="Yamashita H."/>
            <person name="Murakawa K."/>
            <person name="Fujimori K."/>
            <person name="Tanai H."/>
            <person name="Kimata M."/>
            <person name="Watanabe M."/>
            <person name="Hiraoka S."/>
            <person name="Chiba Y."/>
            <person name="Ishida S."/>
            <person name="Ono Y."/>
            <person name="Takiguchi S."/>
            <person name="Watanabe S."/>
            <person name="Yosida M."/>
            <person name="Hotuta T."/>
            <person name="Kusano J."/>
            <person name="Kanehori K."/>
            <person name="Takahashi-Fujii A."/>
            <person name="Hara H."/>
            <person name="Tanase T.-O."/>
            <person name="Nomura Y."/>
            <person name="Togiya S."/>
            <person name="Komai F."/>
            <person name="Hara R."/>
            <person name="Takeuchi K."/>
            <person name="Arita M."/>
            <person name="Imose N."/>
            <person name="Musashino K."/>
            <person name="Yuuki H."/>
            <person name="Oshima A."/>
            <person name="Sasaki N."/>
            <person name="Aotsuka S."/>
            <person name="Yoshikawa Y."/>
            <person name="Matsunawa H."/>
            <person name="Ichihara T."/>
            <person name="Shiohata N."/>
            <person name="Sano S."/>
            <person name="Moriya S."/>
            <person name="Momiyama H."/>
            <person name="Satoh N."/>
            <person name="Takami S."/>
            <person name="Terashima Y."/>
            <person name="Suzuki O."/>
            <person name="Nakagawa S."/>
            <person name="Senoh A."/>
            <person name="Mizoguchi H."/>
            <person name="Goto Y."/>
            <person name="Shimizu F."/>
            <person name="Wakebe H."/>
            <person name="Hishigaki H."/>
            <person name="Watanabe T."/>
            <person name="Sugiyama A."/>
            <person name="Takemoto M."/>
            <person name="Kawakami B."/>
            <person name="Yamazaki M."/>
            <person name="Watanabe K."/>
            <person name="Kumagai A."/>
            <person name="Itakura S."/>
            <person name="Fukuzumi Y."/>
            <person name="Fujimori Y."/>
            <person name="Komiyama M."/>
            <person name="Tashiro H."/>
            <person name="Tanigami A."/>
            <person name="Fujiwara T."/>
            <person name="Ono T."/>
            <person name="Yamada K."/>
            <person name="Fujii Y."/>
            <person name="Ozaki K."/>
            <person name="Hirao M."/>
            <person name="Ohmori Y."/>
            <person name="Kawabata A."/>
            <person name="Hikiji T."/>
            <person name="Kobatake N."/>
            <person name="Inagaki H."/>
            <person name="Ikema Y."/>
            <person name="Okamoto S."/>
            <person name="Okitani R."/>
            <person name="Kawakami T."/>
            <person name="Noguchi S."/>
            <person name="Itoh T."/>
            <person name="Shigeta K."/>
            <person name="Senba T."/>
            <person name="Matsumura K."/>
            <person name="Nakajima Y."/>
            <person name="Mizuno T."/>
            <person name="Morinaga M."/>
            <person name="Sasaki M."/>
            <person name="Togashi T."/>
            <person name="Oyama M."/>
            <person name="Hata H."/>
            <person name="Watanabe M."/>
            <person name="Komatsu T."/>
            <person name="Mizushima-Sugano J."/>
            <person name="Satoh T."/>
            <person name="Shirai Y."/>
            <person name="Takahashi Y."/>
            <person name="Nakagawa K."/>
            <person name="Okumura K."/>
            <person name="Nagase T."/>
            <person name="Nomura N."/>
            <person name="Kikuchi H."/>
            <person name="Masuho Y."/>
            <person name="Yamashita R."/>
            <person name="Nakai K."/>
            <person name="Yada T."/>
            <person name="Nakamura Y."/>
            <person name="Ohara O."/>
            <person name="Isogai T."/>
            <person name="Sugano S."/>
        </authorList>
    </citation>
    <scope>NUCLEOTIDE SEQUENCE [LARGE SCALE MRNA] (ISOFORMS 1 AND 3)</scope>
    <scope>VARIANT ASP-432</scope>
    <source>
        <tissue>Thalamus</tissue>
    </source>
</reference>
<reference key="2">
    <citation type="journal article" date="2006" name="Nature">
        <title>The DNA sequence and biological annotation of human chromosome 1.</title>
        <authorList>
            <person name="Gregory S.G."/>
            <person name="Barlow K.F."/>
            <person name="McLay K.E."/>
            <person name="Kaul R."/>
            <person name="Swarbreck D."/>
            <person name="Dunham A."/>
            <person name="Scott C.E."/>
            <person name="Howe K.L."/>
            <person name="Woodfine K."/>
            <person name="Spencer C.C.A."/>
            <person name="Jones M.C."/>
            <person name="Gillson C."/>
            <person name="Searle S."/>
            <person name="Zhou Y."/>
            <person name="Kokocinski F."/>
            <person name="McDonald L."/>
            <person name="Evans R."/>
            <person name="Phillips K."/>
            <person name="Atkinson A."/>
            <person name="Cooper R."/>
            <person name="Jones C."/>
            <person name="Hall R.E."/>
            <person name="Andrews T.D."/>
            <person name="Lloyd C."/>
            <person name="Ainscough R."/>
            <person name="Almeida J.P."/>
            <person name="Ambrose K.D."/>
            <person name="Anderson F."/>
            <person name="Andrew R.W."/>
            <person name="Ashwell R.I.S."/>
            <person name="Aubin K."/>
            <person name="Babbage A.K."/>
            <person name="Bagguley C.L."/>
            <person name="Bailey J."/>
            <person name="Beasley H."/>
            <person name="Bethel G."/>
            <person name="Bird C.P."/>
            <person name="Bray-Allen S."/>
            <person name="Brown J.Y."/>
            <person name="Brown A.J."/>
            <person name="Buckley D."/>
            <person name="Burton J."/>
            <person name="Bye J."/>
            <person name="Carder C."/>
            <person name="Chapman J.C."/>
            <person name="Clark S.Y."/>
            <person name="Clarke G."/>
            <person name="Clee C."/>
            <person name="Cobley V."/>
            <person name="Collier R.E."/>
            <person name="Corby N."/>
            <person name="Coville G.J."/>
            <person name="Davies J."/>
            <person name="Deadman R."/>
            <person name="Dunn M."/>
            <person name="Earthrowl M."/>
            <person name="Ellington A.G."/>
            <person name="Errington H."/>
            <person name="Frankish A."/>
            <person name="Frankland J."/>
            <person name="French L."/>
            <person name="Garner P."/>
            <person name="Garnett J."/>
            <person name="Gay L."/>
            <person name="Ghori M.R.J."/>
            <person name="Gibson R."/>
            <person name="Gilby L.M."/>
            <person name="Gillett W."/>
            <person name="Glithero R.J."/>
            <person name="Grafham D.V."/>
            <person name="Griffiths C."/>
            <person name="Griffiths-Jones S."/>
            <person name="Grocock R."/>
            <person name="Hammond S."/>
            <person name="Harrison E.S.I."/>
            <person name="Hart E."/>
            <person name="Haugen E."/>
            <person name="Heath P.D."/>
            <person name="Holmes S."/>
            <person name="Holt K."/>
            <person name="Howden P.J."/>
            <person name="Hunt A.R."/>
            <person name="Hunt S.E."/>
            <person name="Hunter G."/>
            <person name="Isherwood J."/>
            <person name="James R."/>
            <person name="Johnson C."/>
            <person name="Johnson D."/>
            <person name="Joy A."/>
            <person name="Kay M."/>
            <person name="Kershaw J.K."/>
            <person name="Kibukawa M."/>
            <person name="Kimberley A.M."/>
            <person name="King A."/>
            <person name="Knights A.J."/>
            <person name="Lad H."/>
            <person name="Laird G."/>
            <person name="Lawlor S."/>
            <person name="Leongamornlert D.A."/>
            <person name="Lloyd D.M."/>
            <person name="Loveland J."/>
            <person name="Lovell J."/>
            <person name="Lush M.J."/>
            <person name="Lyne R."/>
            <person name="Martin S."/>
            <person name="Mashreghi-Mohammadi M."/>
            <person name="Matthews L."/>
            <person name="Matthews N.S.W."/>
            <person name="McLaren S."/>
            <person name="Milne S."/>
            <person name="Mistry S."/>
            <person name="Moore M.J.F."/>
            <person name="Nickerson T."/>
            <person name="O'Dell C.N."/>
            <person name="Oliver K."/>
            <person name="Palmeiri A."/>
            <person name="Palmer S.A."/>
            <person name="Parker A."/>
            <person name="Patel D."/>
            <person name="Pearce A.V."/>
            <person name="Peck A.I."/>
            <person name="Pelan S."/>
            <person name="Phelps K."/>
            <person name="Phillimore B.J."/>
            <person name="Plumb R."/>
            <person name="Rajan J."/>
            <person name="Raymond C."/>
            <person name="Rouse G."/>
            <person name="Saenphimmachak C."/>
            <person name="Sehra H.K."/>
            <person name="Sheridan E."/>
            <person name="Shownkeen R."/>
            <person name="Sims S."/>
            <person name="Skuce C.D."/>
            <person name="Smith M."/>
            <person name="Steward C."/>
            <person name="Subramanian S."/>
            <person name="Sycamore N."/>
            <person name="Tracey A."/>
            <person name="Tromans A."/>
            <person name="Van Helmond Z."/>
            <person name="Wall M."/>
            <person name="Wallis J.M."/>
            <person name="White S."/>
            <person name="Whitehead S.L."/>
            <person name="Wilkinson J.E."/>
            <person name="Willey D.L."/>
            <person name="Williams H."/>
            <person name="Wilming L."/>
            <person name="Wray P.W."/>
            <person name="Wu Z."/>
            <person name="Coulson A."/>
            <person name="Vaudin M."/>
            <person name="Sulston J.E."/>
            <person name="Durbin R.M."/>
            <person name="Hubbard T."/>
            <person name="Wooster R."/>
            <person name="Dunham I."/>
            <person name="Carter N.P."/>
            <person name="McVean G."/>
            <person name="Ross M.T."/>
            <person name="Harrow J."/>
            <person name="Olson M.V."/>
            <person name="Beck S."/>
            <person name="Rogers J."/>
            <person name="Bentley D.R."/>
        </authorList>
    </citation>
    <scope>NUCLEOTIDE SEQUENCE [LARGE SCALE GENOMIC DNA]</scope>
</reference>
<reference key="3">
    <citation type="submission" date="2005-09" db="EMBL/GenBank/DDBJ databases">
        <authorList>
            <person name="Mural R.J."/>
            <person name="Istrail S."/>
            <person name="Sutton G.G."/>
            <person name="Florea L."/>
            <person name="Halpern A.L."/>
            <person name="Mobarry C.M."/>
            <person name="Lippert R."/>
            <person name="Walenz B."/>
            <person name="Shatkay H."/>
            <person name="Dew I."/>
            <person name="Miller J.R."/>
            <person name="Flanigan M.J."/>
            <person name="Edwards N.J."/>
            <person name="Bolanos R."/>
            <person name="Fasulo D."/>
            <person name="Halldorsson B.V."/>
            <person name="Hannenhalli S."/>
            <person name="Turner R."/>
            <person name="Yooseph S."/>
            <person name="Lu F."/>
            <person name="Nusskern D.R."/>
            <person name="Shue B.C."/>
            <person name="Zheng X.H."/>
            <person name="Zhong F."/>
            <person name="Delcher A.L."/>
            <person name="Huson D.H."/>
            <person name="Kravitz S.A."/>
            <person name="Mouchard L."/>
            <person name="Reinert K."/>
            <person name="Remington K.A."/>
            <person name="Clark A.G."/>
            <person name="Waterman M.S."/>
            <person name="Eichler E.E."/>
            <person name="Adams M.D."/>
            <person name="Hunkapiller M.W."/>
            <person name="Myers E.W."/>
            <person name="Venter J.C."/>
        </authorList>
    </citation>
    <scope>NUCLEOTIDE SEQUENCE [LARGE SCALE GENOMIC DNA]</scope>
    <scope>VARIANT ASP-432</scope>
</reference>
<reference key="4">
    <citation type="journal article" date="2004" name="Genome Res.">
        <title>The status, quality, and expansion of the NIH full-length cDNA project: the Mammalian Gene Collection (MGC).</title>
        <authorList>
            <consortium name="The MGC Project Team"/>
        </authorList>
    </citation>
    <scope>NUCLEOTIDE SEQUENCE [LARGE SCALE MRNA] (ISOFORMS 2 AND 4)</scope>
    <scope>VARIANT ASP-432</scope>
    <source>
        <tissue>Eye</tissue>
        <tissue>Muscle</tissue>
    </source>
</reference>
<reference key="5">
    <citation type="journal article" date="1990" name="New Biol.">
        <title>Multiple genes encoding zinc finger domains are expressed in human T cells.</title>
        <authorList>
            <person name="Thiesen H.-J."/>
        </authorList>
    </citation>
    <scope>NUCLEOTIDE SEQUENCE [MRNA] OF 875-930 (ISOFORMS 1/2/3)</scope>
    <source>
        <tissue>Lymphoid tissue</tissue>
    </source>
</reference>
<dbReference type="EMBL" id="AK131405">
    <property type="protein sequence ID" value="BAD18552.1"/>
    <property type="molecule type" value="mRNA"/>
</dbReference>
<dbReference type="EMBL" id="AK290195">
    <property type="protein sequence ID" value="BAF82884.1"/>
    <property type="molecule type" value="mRNA"/>
</dbReference>
<dbReference type="EMBL" id="AC115285">
    <property type="status" value="NOT_ANNOTATED_CDS"/>
    <property type="molecule type" value="Genomic_DNA"/>
</dbReference>
<dbReference type="EMBL" id="AL138837">
    <property type="status" value="NOT_ANNOTATED_CDS"/>
    <property type="molecule type" value="Genomic_DNA"/>
</dbReference>
<dbReference type="EMBL" id="CH471059">
    <property type="protein sequence ID" value="EAX07454.1"/>
    <property type="molecule type" value="Genomic_DNA"/>
</dbReference>
<dbReference type="EMBL" id="BC008827">
    <property type="protein sequence ID" value="AAH08827.1"/>
    <property type="molecule type" value="mRNA"/>
</dbReference>
<dbReference type="EMBL" id="BC011404">
    <property type="protein sequence ID" value="AAH11404.1"/>
    <property type="molecule type" value="mRNA"/>
</dbReference>
<dbReference type="EMBL" id="X52360">
    <property type="protein sequence ID" value="CAA36586.1"/>
    <property type="molecule type" value="mRNA"/>
</dbReference>
<dbReference type="CCDS" id="CCDS41300.1">
    <molecule id="P17040-1"/>
</dbReference>
<dbReference type="PIR" id="I37969">
    <property type="entry name" value="I37969"/>
</dbReference>
<dbReference type="RefSeq" id="NP_001364305.1">
    <molecule id="P17040-1"/>
    <property type="nucleotide sequence ID" value="NM_001377376.1"/>
</dbReference>
<dbReference type="RefSeq" id="NP_001364306.1">
    <molecule id="P17040-3"/>
    <property type="nucleotide sequence ID" value="NM_001377377.1"/>
</dbReference>
<dbReference type="RefSeq" id="NP_660281.3">
    <molecule id="P17040-1"/>
    <property type="nucleotide sequence ID" value="NM_145238.6"/>
</dbReference>
<dbReference type="RefSeq" id="XP_005271228.1">
    <property type="nucleotide sequence ID" value="XM_005271171.3"/>
</dbReference>
<dbReference type="RefSeq" id="XP_006710937.1">
    <property type="nucleotide sequence ID" value="XM_006710874.3"/>
</dbReference>
<dbReference type="RefSeq" id="XP_016857726.1">
    <molecule id="P17040-1"/>
    <property type="nucleotide sequence ID" value="XM_017002237.2"/>
</dbReference>
<dbReference type="RefSeq" id="XP_016857727.1">
    <molecule id="P17040-3"/>
    <property type="nucleotide sequence ID" value="XM_017002238.2"/>
</dbReference>
<dbReference type="RefSeq" id="XP_047285926.1">
    <molecule id="P17040-3"/>
    <property type="nucleotide sequence ID" value="XM_047429970.1"/>
</dbReference>
<dbReference type="SMR" id="P17040"/>
<dbReference type="BioGRID" id="113408">
    <property type="interactions" value="65"/>
</dbReference>
<dbReference type="FunCoup" id="P17040">
    <property type="interactions" value="317"/>
</dbReference>
<dbReference type="IntAct" id="P17040">
    <property type="interactions" value="61"/>
</dbReference>
<dbReference type="STRING" id="9606.ENSP00000355053"/>
<dbReference type="GlyGen" id="P17040">
    <property type="glycosylation" value="1 site, 1 O-linked glycan (1 site)"/>
</dbReference>
<dbReference type="iPTMnet" id="P17040"/>
<dbReference type="PhosphoSitePlus" id="P17040"/>
<dbReference type="BioMuta" id="ZSCAN20"/>
<dbReference type="DMDM" id="229485383"/>
<dbReference type="jPOST" id="P17040"/>
<dbReference type="MassIVE" id="P17040"/>
<dbReference type="PaxDb" id="9606-ENSP00000355053"/>
<dbReference type="PeptideAtlas" id="P17040"/>
<dbReference type="ProteomicsDB" id="53445">
    <molecule id="P17040-1"/>
</dbReference>
<dbReference type="ProteomicsDB" id="53446">
    <molecule id="P17040-2"/>
</dbReference>
<dbReference type="ProteomicsDB" id="53447">
    <molecule id="P17040-3"/>
</dbReference>
<dbReference type="ProteomicsDB" id="53448">
    <molecule id="P17040-4"/>
</dbReference>
<dbReference type="ABCD" id="P17040">
    <property type="antibodies" value="4 sequenced antibodies"/>
</dbReference>
<dbReference type="Antibodypedia" id="8548">
    <property type="antibodies" value="144 antibodies from 27 providers"/>
</dbReference>
<dbReference type="DNASU" id="7579"/>
<dbReference type="Ensembl" id="ENST00000361328.7">
    <molecule id="P17040-1"/>
    <property type="protein sequence ID" value="ENSP00000355053.3"/>
    <property type="gene ID" value="ENSG00000121903.15"/>
</dbReference>
<dbReference type="Ensembl" id="ENST00000373413.2">
    <molecule id="P17040-4"/>
    <property type="protein sequence ID" value="ENSP00000362512.1"/>
    <property type="gene ID" value="ENSG00000121903.15"/>
</dbReference>
<dbReference type="Ensembl" id="ENST00000684572.1">
    <molecule id="P17040-1"/>
    <property type="protein sequence ID" value="ENSP00000507139.1"/>
    <property type="gene ID" value="ENSG00000121903.15"/>
</dbReference>
<dbReference type="GeneID" id="7579"/>
<dbReference type="KEGG" id="hsa:7579"/>
<dbReference type="MANE-Select" id="ENST00000684572.1">
    <property type="protein sequence ID" value="ENSP00000507139.1"/>
    <property type="RefSeq nucleotide sequence ID" value="NM_001377376.1"/>
    <property type="RefSeq protein sequence ID" value="NP_001364305.1"/>
</dbReference>
<dbReference type="UCSC" id="uc001bxj.5">
    <molecule id="P17040-1"/>
    <property type="organism name" value="human"/>
</dbReference>
<dbReference type="AGR" id="HGNC:13093"/>
<dbReference type="CTD" id="7579"/>
<dbReference type="DisGeNET" id="7579"/>
<dbReference type="GeneCards" id="ZSCAN20"/>
<dbReference type="HGNC" id="HGNC:13093">
    <property type="gene designation" value="ZSCAN20"/>
</dbReference>
<dbReference type="HPA" id="ENSG00000121903">
    <property type="expression patterns" value="Low tissue specificity"/>
</dbReference>
<dbReference type="MalaCards" id="ZSCAN20"/>
<dbReference type="MIM" id="611315">
    <property type="type" value="gene"/>
</dbReference>
<dbReference type="neXtProt" id="NX_P17040"/>
<dbReference type="OpenTargets" id="ENSG00000121903"/>
<dbReference type="PharmGKB" id="PA37668"/>
<dbReference type="VEuPathDB" id="HostDB:ENSG00000121903"/>
<dbReference type="eggNOG" id="KOG1721">
    <property type="taxonomic scope" value="Eukaryota"/>
</dbReference>
<dbReference type="GeneTree" id="ENSGT00940000161580"/>
<dbReference type="HOGENOM" id="CLU_002678_88_0_1"/>
<dbReference type="InParanoid" id="P17040"/>
<dbReference type="OMA" id="KLQTCHQ"/>
<dbReference type="OrthoDB" id="691673at2759"/>
<dbReference type="PAN-GO" id="P17040">
    <property type="GO annotations" value="3 GO annotations based on evolutionary models"/>
</dbReference>
<dbReference type="PhylomeDB" id="P17040"/>
<dbReference type="TreeFam" id="TF337082"/>
<dbReference type="PathwayCommons" id="P17040"/>
<dbReference type="SignaLink" id="P17040"/>
<dbReference type="BioGRID-ORCS" id="7579">
    <property type="hits" value="229 hits in 1180 CRISPR screens"/>
</dbReference>
<dbReference type="GenomeRNAi" id="7579"/>
<dbReference type="Pharos" id="P17040">
    <property type="development level" value="Tdark"/>
</dbReference>
<dbReference type="PRO" id="PR:P17040"/>
<dbReference type="Proteomes" id="UP000005640">
    <property type="component" value="Chromosome 1"/>
</dbReference>
<dbReference type="RNAct" id="P17040">
    <property type="molecule type" value="protein"/>
</dbReference>
<dbReference type="Bgee" id="ENSG00000121903">
    <property type="expression patterns" value="Expressed in sperm and 115 other cell types or tissues"/>
</dbReference>
<dbReference type="GO" id="GO:0005634">
    <property type="term" value="C:nucleus"/>
    <property type="evidence" value="ECO:0007669"/>
    <property type="project" value="UniProtKB-SubCell"/>
</dbReference>
<dbReference type="GO" id="GO:0000981">
    <property type="term" value="F:DNA-binding transcription factor activity, RNA polymerase II-specific"/>
    <property type="evidence" value="ECO:0000318"/>
    <property type="project" value="GO_Central"/>
</dbReference>
<dbReference type="GO" id="GO:0000978">
    <property type="term" value="F:RNA polymerase II cis-regulatory region sequence-specific DNA binding"/>
    <property type="evidence" value="ECO:0000318"/>
    <property type="project" value="GO_Central"/>
</dbReference>
<dbReference type="GO" id="GO:0008270">
    <property type="term" value="F:zinc ion binding"/>
    <property type="evidence" value="ECO:0007669"/>
    <property type="project" value="UniProtKB-KW"/>
</dbReference>
<dbReference type="GO" id="GO:0006357">
    <property type="term" value="P:regulation of transcription by RNA polymerase II"/>
    <property type="evidence" value="ECO:0000318"/>
    <property type="project" value="GO_Central"/>
</dbReference>
<dbReference type="CDD" id="cd07936">
    <property type="entry name" value="SCAN"/>
    <property type="match status" value="1"/>
</dbReference>
<dbReference type="FunFam" id="3.30.160.60:FF:002108">
    <property type="entry name" value="Zinc finger and SCAN domain containing 20"/>
    <property type="match status" value="1"/>
</dbReference>
<dbReference type="FunFam" id="1.10.10.60:FF:000032">
    <property type="entry name" value="Zinc finger and SCAN domain-containing 20"/>
    <property type="match status" value="2"/>
</dbReference>
<dbReference type="FunFam" id="3.30.160.60:FF:000056">
    <property type="entry name" value="Zinc finger and SCAN domain-containing 20"/>
    <property type="match status" value="1"/>
</dbReference>
<dbReference type="FunFam" id="3.30.160.60:FF:003000">
    <property type="entry name" value="Zinc finger and SCAN domain-containing 20"/>
    <property type="match status" value="1"/>
</dbReference>
<dbReference type="FunFam" id="3.30.160.60:FF:001024">
    <property type="entry name" value="Zinc finger and SCAN domain-containing protein 20"/>
    <property type="match status" value="1"/>
</dbReference>
<dbReference type="FunFam" id="3.30.160.60:FF:000355">
    <property type="entry name" value="zinc finger and SCAN domain-containing protein 20 isoform X1"/>
    <property type="match status" value="1"/>
</dbReference>
<dbReference type="FunFam" id="3.30.160.60:FF:001407">
    <property type="entry name" value="zinc finger and SCAN domain-containing protein 20 isoform X1"/>
    <property type="match status" value="1"/>
</dbReference>
<dbReference type="FunFam" id="3.30.160.60:FF:000932">
    <property type="entry name" value="zinc finger and SCAN domain-containing protein 20 isoform X2"/>
    <property type="match status" value="1"/>
</dbReference>
<dbReference type="FunFam" id="3.30.160.60:FF:000258">
    <property type="entry name" value="zinc finger and SCAN domain-containing protein 29 isoform X2"/>
    <property type="match status" value="1"/>
</dbReference>
<dbReference type="FunFam" id="1.10.4020.10:FF:000001">
    <property type="entry name" value="zinc finger protein 263 isoform X1"/>
    <property type="match status" value="1"/>
</dbReference>
<dbReference type="FunFam" id="3.30.160.60:FF:002343">
    <property type="entry name" value="Zinc finger protein 33A"/>
    <property type="match status" value="1"/>
</dbReference>
<dbReference type="FunFam" id="3.30.160.60:FF:002090">
    <property type="entry name" value="Zinc finger protein 473"/>
    <property type="match status" value="1"/>
</dbReference>
<dbReference type="Gene3D" id="3.30.160.60">
    <property type="entry name" value="Classic Zinc Finger"/>
    <property type="match status" value="10"/>
</dbReference>
<dbReference type="Gene3D" id="1.10.4020.10">
    <property type="entry name" value="DNA breaking-rejoining enzymes"/>
    <property type="match status" value="1"/>
</dbReference>
<dbReference type="Gene3D" id="1.10.10.60">
    <property type="entry name" value="Homeodomain-like"/>
    <property type="match status" value="2"/>
</dbReference>
<dbReference type="InterPro" id="IPR044822">
    <property type="entry name" value="Myb_DNA-bind_4"/>
</dbReference>
<dbReference type="InterPro" id="IPR001005">
    <property type="entry name" value="SANT/Myb"/>
</dbReference>
<dbReference type="InterPro" id="IPR003309">
    <property type="entry name" value="SCAN_dom"/>
</dbReference>
<dbReference type="InterPro" id="IPR038269">
    <property type="entry name" value="SCAN_sf"/>
</dbReference>
<dbReference type="InterPro" id="IPR036236">
    <property type="entry name" value="Znf_C2H2_sf"/>
</dbReference>
<dbReference type="InterPro" id="IPR013087">
    <property type="entry name" value="Znf_C2H2_type"/>
</dbReference>
<dbReference type="PANTHER" id="PTHR24393">
    <property type="entry name" value="ZINC FINGER PROTEIN"/>
    <property type="match status" value="1"/>
</dbReference>
<dbReference type="PANTHER" id="PTHR24393:SF100">
    <property type="entry name" value="ZINC FINGER PROTEIN-RELATED"/>
    <property type="match status" value="1"/>
</dbReference>
<dbReference type="Pfam" id="PF13837">
    <property type="entry name" value="Myb_DNA-bind_4"/>
    <property type="match status" value="2"/>
</dbReference>
<dbReference type="Pfam" id="PF02023">
    <property type="entry name" value="SCAN"/>
    <property type="match status" value="1"/>
</dbReference>
<dbReference type="Pfam" id="PF00096">
    <property type="entry name" value="zf-C2H2"/>
    <property type="match status" value="10"/>
</dbReference>
<dbReference type="SMART" id="SM00717">
    <property type="entry name" value="SANT"/>
    <property type="match status" value="2"/>
</dbReference>
<dbReference type="SMART" id="SM00431">
    <property type="entry name" value="SCAN"/>
    <property type="match status" value="1"/>
</dbReference>
<dbReference type="SMART" id="SM00355">
    <property type="entry name" value="ZnF_C2H2"/>
    <property type="match status" value="10"/>
</dbReference>
<dbReference type="SUPFAM" id="SSF57667">
    <property type="entry name" value="beta-beta-alpha zinc fingers"/>
    <property type="match status" value="6"/>
</dbReference>
<dbReference type="SUPFAM" id="SSF47353">
    <property type="entry name" value="Retrovirus capsid dimerization domain-like"/>
    <property type="match status" value="1"/>
</dbReference>
<dbReference type="PROSITE" id="PS50804">
    <property type="entry name" value="SCAN_BOX"/>
    <property type="match status" value="1"/>
</dbReference>
<dbReference type="PROSITE" id="PS00028">
    <property type="entry name" value="ZINC_FINGER_C2H2_1"/>
    <property type="match status" value="10"/>
</dbReference>
<dbReference type="PROSITE" id="PS50157">
    <property type="entry name" value="ZINC_FINGER_C2H2_2"/>
    <property type="match status" value="10"/>
</dbReference>
<comment type="function">
    <text>May be involved in transcriptional regulation.</text>
</comment>
<comment type="interaction">
    <interactant intactId="EBI-745838">
        <id>P17040</id>
    </interactant>
    <interactant intactId="EBI-745846">
        <id>P57086</id>
        <label>SCAND1</label>
    </interactant>
    <organismsDiffer>false</organismsDiffer>
    <experiments>3</experiments>
</comment>
<comment type="interaction">
    <interactant intactId="EBI-16440054">
        <id>P17040-4</id>
    </interactant>
    <interactant intactId="EBI-16431094">
        <id>A0A0S2Z6X0</id>
        <label>ZKSCAN4</label>
    </interactant>
    <organismsDiffer>false</organismsDiffer>
    <experiments>3</experiments>
</comment>
<comment type="subcellular location">
    <subcellularLocation>
        <location evidence="2">Nucleus</location>
    </subcellularLocation>
</comment>
<comment type="alternative products">
    <event type="alternative splicing"/>
    <isoform>
        <id>P17040-1</id>
        <name>1</name>
        <sequence type="displayed"/>
    </isoform>
    <isoform>
        <id>P17040-2</id>
        <name>2</name>
        <sequence type="described" ref="VSP_036735"/>
    </isoform>
    <isoform>
        <id>P17040-3</id>
        <name>3</name>
        <sequence type="described" ref="VSP_036738"/>
    </isoform>
    <isoform>
        <id>P17040-4</id>
        <name>4</name>
        <sequence type="described" ref="VSP_036736 VSP_036737 VSP_036739"/>
    </isoform>
</comment>
<comment type="similarity">
    <text evidence="9">Belongs to the krueppel C2H2-type zinc-finger protein family.</text>
</comment>
<feature type="chain" id="PRO_0000047360" description="Zinc finger and SCAN domain-containing protein 20">
    <location>
        <begin position="1"/>
        <end position="1043"/>
    </location>
</feature>
<feature type="domain" description="SCAN box" evidence="2">
    <location>
        <begin position="51"/>
        <end position="133"/>
    </location>
</feature>
<feature type="zinc finger region" description="C2H2-type 1" evidence="1">
    <location>
        <begin position="710"/>
        <end position="732"/>
    </location>
</feature>
<feature type="zinc finger region" description="C2H2-type 2" evidence="1">
    <location>
        <begin position="738"/>
        <end position="760"/>
    </location>
</feature>
<feature type="zinc finger region" description="C2H2-type 3" evidence="1">
    <location>
        <begin position="766"/>
        <end position="788"/>
    </location>
</feature>
<feature type="zinc finger region" description="C2H2-type 4" evidence="1">
    <location>
        <begin position="794"/>
        <end position="816"/>
    </location>
</feature>
<feature type="zinc finger region" description="C2H2-type 5" evidence="1">
    <location>
        <begin position="875"/>
        <end position="897"/>
    </location>
</feature>
<feature type="zinc finger region" description="C2H2-type 6" evidence="1">
    <location>
        <begin position="903"/>
        <end position="925"/>
    </location>
</feature>
<feature type="zinc finger region" description="C2H2-type 7" evidence="1">
    <location>
        <begin position="931"/>
        <end position="953"/>
    </location>
</feature>
<feature type="zinc finger region" description="C2H2-type 8" evidence="1">
    <location>
        <begin position="959"/>
        <end position="981"/>
    </location>
</feature>
<feature type="zinc finger region" description="C2H2-type 9" evidence="1">
    <location>
        <begin position="987"/>
        <end position="1009"/>
    </location>
</feature>
<feature type="zinc finger region" description="C2H2-type 10" evidence="1">
    <location>
        <begin position="1015"/>
        <end position="1037"/>
    </location>
</feature>
<feature type="region of interest" description="Disordered" evidence="3">
    <location>
        <begin position="30"/>
        <end position="49"/>
    </location>
</feature>
<feature type="region of interest" description="Disordered" evidence="3">
    <location>
        <begin position="661"/>
        <end position="692"/>
    </location>
</feature>
<feature type="region of interest" description="Disordered" evidence="3">
    <location>
        <begin position="835"/>
        <end position="873"/>
    </location>
</feature>
<feature type="compositionally biased region" description="Acidic residues" evidence="3">
    <location>
        <begin position="663"/>
        <end position="675"/>
    </location>
</feature>
<feature type="compositionally biased region" description="Polar residues" evidence="3">
    <location>
        <begin position="851"/>
        <end position="871"/>
    </location>
</feature>
<feature type="splice variant" id="VSP_036735" description="In isoform 2." evidence="8">
    <location>
        <begin position="25"/>
        <end position="90"/>
    </location>
</feature>
<feature type="splice variant" id="VSP_036736" description="In isoform 4." evidence="8">
    <location>
        <begin position="202"/>
        <end position="255"/>
    </location>
</feature>
<feature type="splice variant" id="VSP_036737" description="In isoform 4." evidence="8">
    <original>AGVHWG</original>
    <variation>GKNMGV</variation>
    <location>
        <begin position="482"/>
        <end position="487"/>
    </location>
</feature>
<feature type="splice variant" id="VSP_036738" description="In isoform 3." evidence="7">
    <location>
        <position position="482"/>
    </location>
</feature>
<feature type="splice variant" id="VSP_036739" description="In isoform 4." evidence="8">
    <location>
        <begin position="488"/>
        <end position="1043"/>
    </location>
</feature>
<feature type="sequence variant" id="VAR_054799" description="In dbSNP:rs34446695.">
    <original>D</original>
    <variation>N</variation>
    <location>
        <position position="248"/>
    </location>
</feature>
<feature type="sequence variant" id="VAR_054800" description="In dbSNP:rs4403594." evidence="4 5 6">
    <original>Y</original>
    <variation>D</variation>
    <location>
        <position position="432"/>
    </location>
</feature>
<feature type="sequence conflict" description="In Ref. 1; BAF82884." evidence="9" ref="1">
    <original>L</original>
    <variation>P</variation>
    <location>
        <position position="100"/>
    </location>
</feature>
<feature type="sequence conflict" description="In Ref. 1; BAF82884." evidence="9" ref="1">
    <original>V</original>
    <variation>M</variation>
    <location>
        <position position="126"/>
    </location>
</feature>
<feature type="sequence conflict" description="In Ref. 1; BAD18552." evidence="9" ref="1">
    <original>C</original>
    <variation>R</variation>
    <location>
        <position position="740"/>
    </location>
</feature>
<name>ZSC20_HUMAN</name>